<proteinExistence type="evidence at transcript level"/>
<name>TBB1_CYAPA</name>
<dbReference type="EMBL" id="AF092952">
    <property type="protein sequence ID" value="AAD03712.1"/>
    <property type="molecule type" value="mRNA"/>
</dbReference>
<dbReference type="SMR" id="Q9ZSW1"/>
<dbReference type="GO" id="GO:0005737">
    <property type="term" value="C:cytoplasm"/>
    <property type="evidence" value="ECO:0007669"/>
    <property type="project" value="UniProtKB-KW"/>
</dbReference>
<dbReference type="GO" id="GO:0005874">
    <property type="term" value="C:microtubule"/>
    <property type="evidence" value="ECO:0007669"/>
    <property type="project" value="UniProtKB-KW"/>
</dbReference>
<dbReference type="GO" id="GO:0005525">
    <property type="term" value="F:GTP binding"/>
    <property type="evidence" value="ECO:0007669"/>
    <property type="project" value="UniProtKB-KW"/>
</dbReference>
<dbReference type="GO" id="GO:0003924">
    <property type="term" value="F:GTPase activity"/>
    <property type="evidence" value="ECO:0007669"/>
    <property type="project" value="InterPro"/>
</dbReference>
<dbReference type="GO" id="GO:0046872">
    <property type="term" value="F:metal ion binding"/>
    <property type="evidence" value="ECO:0007669"/>
    <property type="project" value="UniProtKB-KW"/>
</dbReference>
<dbReference type="GO" id="GO:0005200">
    <property type="term" value="F:structural constituent of cytoskeleton"/>
    <property type="evidence" value="ECO:0007669"/>
    <property type="project" value="InterPro"/>
</dbReference>
<dbReference type="GO" id="GO:0007017">
    <property type="term" value="P:microtubule-based process"/>
    <property type="evidence" value="ECO:0007669"/>
    <property type="project" value="InterPro"/>
</dbReference>
<dbReference type="CDD" id="cd02187">
    <property type="entry name" value="beta_tubulin"/>
    <property type="match status" value="1"/>
</dbReference>
<dbReference type="FunFam" id="1.10.287.600:FF:000002">
    <property type="entry name" value="Tubulin beta chain"/>
    <property type="match status" value="1"/>
</dbReference>
<dbReference type="FunFam" id="3.30.1330.20:FF:000002">
    <property type="entry name" value="Tubulin beta chain"/>
    <property type="match status" value="1"/>
</dbReference>
<dbReference type="FunFam" id="3.40.50.1440:FF:000005">
    <property type="entry name" value="Tubulin beta chain"/>
    <property type="match status" value="1"/>
</dbReference>
<dbReference type="Gene3D" id="1.10.287.600">
    <property type="entry name" value="Helix hairpin bin"/>
    <property type="match status" value="1"/>
</dbReference>
<dbReference type="Gene3D" id="3.30.1330.20">
    <property type="entry name" value="Tubulin/FtsZ, C-terminal domain"/>
    <property type="match status" value="1"/>
</dbReference>
<dbReference type="Gene3D" id="3.40.50.1440">
    <property type="entry name" value="Tubulin/FtsZ, GTPase domain"/>
    <property type="match status" value="1"/>
</dbReference>
<dbReference type="InterPro" id="IPR013838">
    <property type="entry name" value="Beta-tubulin_BS"/>
</dbReference>
<dbReference type="InterPro" id="IPR002453">
    <property type="entry name" value="Beta_tubulin"/>
</dbReference>
<dbReference type="InterPro" id="IPR008280">
    <property type="entry name" value="Tub_FtsZ_C"/>
</dbReference>
<dbReference type="InterPro" id="IPR000217">
    <property type="entry name" value="Tubulin"/>
</dbReference>
<dbReference type="InterPro" id="IPR037103">
    <property type="entry name" value="Tubulin/FtsZ-like_C"/>
</dbReference>
<dbReference type="InterPro" id="IPR018316">
    <property type="entry name" value="Tubulin/FtsZ_2-layer-sand-dom"/>
</dbReference>
<dbReference type="InterPro" id="IPR036525">
    <property type="entry name" value="Tubulin/FtsZ_GTPase_sf"/>
</dbReference>
<dbReference type="InterPro" id="IPR023123">
    <property type="entry name" value="Tubulin_C"/>
</dbReference>
<dbReference type="InterPro" id="IPR017975">
    <property type="entry name" value="Tubulin_CS"/>
</dbReference>
<dbReference type="InterPro" id="IPR003008">
    <property type="entry name" value="Tubulin_FtsZ_GTPase"/>
</dbReference>
<dbReference type="PANTHER" id="PTHR11588">
    <property type="entry name" value="TUBULIN"/>
    <property type="match status" value="1"/>
</dbReference>
<dbReference type="Pfam" id="PF00091">
    <property type="entry name" value="Tubulin"/>
    <property type="match status" value="1"/>
</dbReference>
<dbReference type="Pfam" id="PF03953">
    <property type="entry name" value="Tubulin_C"/>
    <property type="match status" value="1"/>
</dbReference>
<dbReference type="PRINTS" id="PR01163">
    <property type="entry name" value="BETATUBULIN"/>
</dbReference>
<dbReference type="PRINTS" id="PR01161">
    <property type="entry name" value="TUBULIN"/>
</dbReference>
<dbReference type="SMART" id="SM00864">
    <property type="entry name" value="Tubulin"/>
    <property type="match status" value="1"/>
</dbReference>
<dbReference type="SMART" id="SM00865">
    <property type="entry name" value="Tubulin_C"/>
    <property type="match status" value="1"/>
</dbReference>
<dbReference type="SUPFAM" id="SSF55307">
    <property type="entry name" value="Tubulin C-terminal domain-like"/>
    <property type="match status" value="1"/>
</dbReference>
<dbReference type="SUPFAM" id="SSF52490">
    <property type="entry name" value="Tubulin nucleotide-binding domain-like"/>
    <property type="match status" value="1"/>
</dbReference>
<dbReference type="PROSITE" id="PS00227">
    <property type="entry name" value="TUBULIN"/>
    <property type="match status" value="1"/>
</dbReference>
<dbReference type="PROSITE" id="PS00228">
    <property type="entry name" value="TUBULIN_B_AUTOREG"/>
    <property type="match status" value="1"/>
</dbReference>
<evidence type="ECO:0000250" key="1">
    <source>
        <dbReference type="UniProtKB" id="P68363"/>
    </source>
</evidence>
<evidence type="ECO:0000250" key="2">
    <source>
        <dbReference type="UniProtKB" id="Q13509"/>
    </source>
</evidence>
<evidence type="ECO:0000256" key="3">
    <source>
        <dbReference type="SAM" id="MobiDB-lite"/>
    </source>
</evidence>
<evidence type="ECO:0000305" key="4"/>
<protein>
    <recommendedName>
        <fullName>Tubulin beta-1 chain</fullName>
    </recommendedName>
    <alternativeName>
        <fullName>Beta-1-tubulin</fullName>
    </alternativeName>
</protein>
<gene>
    <name type="primary">TUBB1</name>
</gene>
<organism>
    <name type="scientific">Cyanophora paradoxa</name>
    <dbReference type="NCBI Taxonomy" id="2762"/>
    <lineage>
        <taxon>Eukaryota</taxon>
        <taxon>Glaucocystophyceae</taxon>
        <taxon>Cyanophoraceae</taxon>
        <taxon>Cyanophora</taxon>
    </lineage>
</organism>
<comment type="function">
    <text>Tubulin is the major constituent of microtubules, a cylinder consisting of laterally associated linear protofilaments composed of alpha- and beta-tubulin heterodimers. Microtubules grow by the addition of GTP-tubulin dimers to the microtubule end, where a stabilizing cap forms. Below the cap, tubulin dimers are in GDP-bound state, owing to GTPase activity of alpha-tubulin.</text>
</comment>
<comment type="cofactor">
    <cofactor evidence="1">
        <name>Mg(2+)</name>
        <dbReference type="ChEBI" id="CHEBI:18420"/>
    </cofactor>
</comment>
<comment type="subunit">
    <text>Dimer of alpha and beta chains. A typical microtubule is a hollow water-filled tube with an outer diameter of 25 nm and an inner diameter of 15 nM. Alpha-beta heterodimers associate head-to-tail to form protofilaments running lengthwise along the microtubule wall with the beta-tubulin subunit facing the microtubule plus end conferring a structural polarity. Microtubules usually have 13 protofilaments but different protofilament numbers can be found in some organisms and specialized cells.</text>
</comment>
<comment type="subcellular location">
    <subcellularLocation>
        <location>Cytoplasm</location>
        <location>Cytoskeleton</location>
    </subcellularLocation>
</comment>
<comment type="similarity">
    <text evidence="4">Belongs to the tubulin family.</text>
</comment>
<accession>Q9ZSW1</accession>
<reference key="1">
    <citation type="submission" date="1998-09" db="EMBL/GenBank/DDBJ databases">
        <title>Phylogenetic analysis of beta tubulins.</title>
        <authorList>
            <person name="Keeling P."/>
            <person name="Hink-Schauer C."/>
            <person name="Loeffelhardt W."/>
        </authorList>
    </citation>
    <scope>NUCLEOTIDE SEQUENCE [MRNA]</scope>
    <source>
        <strain>UTEX LB 555 / Pringsheim</strain>
    </source>
</reference>
<feature type="chain" id="PRO_0000048337" description="Tubulin beta-1 chain">
    <location>
        <begin position="1"/>
        <end position="447"/>
    </location>
</feature>
<feature type="region of interest" description="Disordered" evidence="3">
    <location>
        <begin position="424"/>
        <end position="447"/>
    </location>
</feature>
<feature type="compositionally biased region" description="Acidic residues" evidence="3">
    <location>
        <begin position="429"/>
        <end position="447"/>
    </location>
</feature>
<feature type="binding site" evidence="2">
    <location>
        <position position="11"/>
    </location>
    <ligand>
        <name>GTP</name>
        <dbReference type="ChEBI" id="CHEBI:37565"/>
    </ligand>
</feature>
<feature type="binding site" evidence="1">
    <location>
        <position position="69"/>
    </location>
    <ligand>
        <name>GTP</name>
        <dbReference type="ChEBI" id="CHEBI:37565"/>
    </ligand>
</feature>
<feature type="binding site" evidence="1">
    <location>
        <position position="69"/>
    </location>
    <ligand>
        <name>Mg(2+)</name>
        <dbReference type="ChEBI" id="CHEBI:18420"/>
    </ligand>
</feature>
<feature type="binding site" evidence="2">
    <location>
        <position position="138"/>
    </location>
    <ligand>
        <name>GTP</name>
        <dbReference type="ChEBI" id="CHEBI:37565"/>
    </ligand>
</feature>
<feature type="binding site" evidence="2">
    <location>
        <position position="142"/>
    </location>
    <ligand>
        <name>GTP</name>
        <dbReference type="ChEBI" id="CHEBI:37565"/>
    </ligand>
</feature>
<feature type="binding site" evidence="2">
    <location>
        <position position="143"/>
    </location>
    <ligand>
        <name>GTP</name>
        <dbReference type="ChEBI" id="CHEBI:37565"/>
    </ligand>
</feature>
<feature type="binding site" evidence="2">
    <location>
        <position position="144"/>
    </location>
    <ligand>
        <name>GTP</name>
        <dbReference type="ChEBI" id="CHEBI:37565"/>
    </ligand>
</feature>
<feature type="binding site" evidence="2">
    <location>
        <position position="204"/>
    </location>
    <ligand>
        <name>GTP</name>
        <dbReference type="ChEBI" id="CHEBI:37565"/>
    </ligand>
</feature>
<feature type="binding site" evidence="2">
    <location>
        <position position="226"/>
    </location>
    <ligand>
        <name>GTP</name>
        <dbReference type="ChEBI" id="CHEBI:37565"/>
    </ligand>
</feature>
<keyword id="KW-0963">Cytoplasm</keyword>
<keyword id="KW-0206">Cytoskeleton</keyword>
<keyword id="KW-0342">GTP-binding</keyword>
<keyword id="KW-0460">Magnesium</keyword>
<keyword id="KW-0479">Metal-binding</keyword>
<keyword id="KW-0493">Microtubule</keyword>
<keyword id="KW-0547">Nucleotide-binding</keyword>
<sequence>MREIVHVQGGQCGNQIGAKFWEVISDEHGVDPTGTYHGDSDLQLERINVYYNEATGGRYVPRAVLMDLEPGTMDSVRAGPYGQLFRPDNFIFGQSGAGNNWAKGHYTEGAELIDSVLDVVRKEAEGCDCLQGFQITHSMGGGTGSGMGTLLIAKVREEYPDRMMCTYSVFPSPKVSDTVVEPYNATLSVHQLVENADEVMVIDNEALYDICFRTLKLTTPTYGDLNHLVSACISGVTCCLRFPGQLNSDLRKLAVNLIPFPRLHFFMIGFVPLTSRGSQQYRALTVPELTQQMFDAKNMMCAADPRHGRYLTASALFRGRMSTKEVDEQMLNVQNKNSSYFVEWIPNNIKASVCDIPPKGLKMSATFIGNSTAIQEMFKRVSEQFTAMFRRKAFLHWYTGEGMDEMEFTEAESNMNDLVSEYQQYQDATAEEEGEGDEEEAEGEAAA</sequence>